<organism>
    <name type="scientific">Shigella boydii serotype 4 (strain Sb227)</name>
    <dbReference type="NCBI Taxonomy" id="300268"/>
    <lineage>
        <taxon>Bacteria</taxon>
        <taxon>Pseudomonadati</taxon>
        <taxon>Pseudomonadota</taxon>
        <taxon>Gammaproteobacteria</taxon>
        <taxon>Enterobacterales</taxon>
        <taxon>Enterobacteriaceae</taxon>
        <taxon>Shigella</taxon>
    </lineage>
</organism>
<dbReference type="EC" id="7.6.2.-" evidence="1"/>
<dbReference type="EMBL" id="CP000036">
    <property type="protein sequence ID" value="ABB66534.1"/>
    <property type="status" value="ALT_INIT"/>
    <property type="molecule type" value="Genomic_DNA"/>
</dbReference>
<dbReference type="RefSeq" id="WP_001033691.1">
    <property type="nucleotide sequence ID" value="NC_007613.1"/>
</dbReference>
<dbReference type="SMR" id="Q31ZH4"/>
<dbReference type="KEGG" id="sbo:SBO_1944"/>
<dbReference type="HOGENOM" id="CLU_000604_1_22_6"/>
<dbReference type="Proteomes" id="UP000007067">
    <property type="component" value="Chromosome"/>
</dbReference>
<dbReference type="GO" id="GO:0005886">
    <property type="term" value="C:plasma membrane"/>
    <property type="evidence" value="ECO:0007669"/>
    <property type="project" value="UniProtKB-SubCell"/>
</dbReference>
<dbReference type="GO" id="GO:0005524">
    <property type="term" value="F:ATP binding"/>
    <property type="evidence" value="ECO:0007669"/>
    <property type="project" value="UniProtKB-KW"/>
</dbReference>
<dbReference type="GO" id="GO:0016887">
    <property type="term" value="F:ATP hydrolysis activity"/>
    <property type="evidence" value="ECO:0007669"/>
    <property type="project" value="InterPro"/>
</dbReference>
<dbReference type="GO" id="GO:0022857">
    <property type="term" value="F:transmembrane transporter activity"/>
    <property type="evidence" value="ECO:0007669"/>
    <property type="project" value="TreeGrafter"/>
</dbReference>
<dbReference type="GO" id="GO:0044874">
    <property type="term" value="P:lipoprotein localization to outer membrane"/>
    <property type="evidence" value="ECO:0007669"/>
    <property type="project" value="TreeGrafter"/>
</dbReference>
<dbReference type="GO" id="GO:0089705">
    <property type="term" value="P:protein localization to outer membrane"/>
    <property type="evidence" value="ECO:0007669"/>
    <property type="project" value="TreeGrafter"/>
</dbReference>
<dbReference type="CDD" id="cd03255">
    <property type="entry name" value="ABC_MJ0796_LolCDE_FtsE"/>
    <property type="match status" value="1"/>
</dbReference>
<dbReference type="FunFam" id="3.40.50.300:FF:000230">
    <property type="entry name" value="Lipoprotein-releasing system ATP-binding protein LolD"/>
    <property type="match status" value="1"/>
</dbReference>
<dbReference type="Gene3D" id="3.40.50.300">
    <property type="entry name" value="P-loop containing nucleotide triphosphate hydrolases"/>
    <property type="match status" value="1"/>
</dbReference>
<dbReference type="InterPro" id="IPR003593">
    <property type="entry name" value="AAA+_ATPase"/>
</dbReference>
<dbReference type="InterPro" id="IPR003439">
    <property type="entry name" value="ABC_transporter-like_ATP-bd"/>
</dbReference>
<dbReference type="InterPro" id="IPR017871">
    <property type="entry name" value="ABC_transporter-like_CS"/>
</dbReference>
<dbReference type="InterPro" id="IPR015854">
    <property type="entry name" value="ABC_transpr_LolD-like"/>
</dbReference>
<dbReference type="InterPro" id="IPR011924">
    <property type="entry name" value="LolD_lipo_ATP-bd"/>
</dbReference>
<dbReference type="InterPro" id="IPR017911">
    <property type="entry name" value="MacB-like_ATP-bd"/>
</dbReference>
<dbReference type="InterPro" id="IPR027417">
    <property type="entry name" value="P-loop_NTPase"/>
</dbReference>
<dbReference type="NCBIfam" id="TIGR02211">
    <property type="entry name" value="LolD_lipo_ex"/>
    <property type="match status" value="1"/>
</dbReference>
<dbReference type="NCBIfam" id="NF008639">
    <property type="entry name" value="PRK11629.1"/>
    <property type="match status" value="1"/>
</dbReference>
<dbReference type="PANTHER" id="PTHR24220">
    <property type="entry name" value="IMPORT ATP-BINDING PROTEIN"/>
    <property type="match status" value="1"/>
</dbReference>
<dbReference type="PANTHER" id="PTHR24220:SF689">
    <property type="entry name" value="LIPOPROTEIN-RELEASING SYSTEM ATP-BINDING PROTEIN LOLD"/>
    <property type="match status" value="1"/>
</dbReference>
<dbReference type="Pfam" id="PF00005">
    <property type="entry name" value="ABC_tran"/>
    <property type="match status" value="1"/>
</dbReference>
<dbReference type="SMART" id="SM00382">
    <property type="entry name" value="AAA"/>
    <property type="match status" value="1"/>
</dbReference>
<dbReference type="SUPFAM" id="SSF52540">
    <property type="entry name" value="P-loop containing nucleoside triphosphate hydrolases"/>
    <property type="match status" value="1"/>
</dbReference>
<dbReference type="PROSITE" id="PS00211">
    <property type="entry name" value="ABC_TRANSPORTER_1"/>
    <property type="match status" value="1"/>
</dbReference>
<dbReference type="PROSITE" id="PS50893">
    <property type="entry name" value="ABC_TRANSPORTER_2"/>
    <property type="match status" value="1"/>
</dbReference>
<dbReference type="PROSITE" id="PS51244">
    <property type="entry name" value="LOLD"/>
    <property type="match status" value="1"/>
</dbReference>
<protein>
    <recommendedName>
        <fullName evidence="1">Lipoprotein-releasing system ATP-binding protein LolD</fullName>
        <ecNumber evidence="1">7.6.2.-</ecNumber>
    </recommendedName>
</protein>
<keyword id="KW-0067">ATP-binding</keyword>
<keyword id="KW-0997">Cell inner membrane</keyword>
<keyword id="KW-1003">Cell membrane</keyword>
<keyword id="KW-0472">Membrane</keyword>
<keyword id="KW-0547">Nucleotide-binding</keyword>
<keyword id="KW-1278">Translocase</keyword>
<keyword id="KW-0813">Transport</keyword>
<evidence type="ECO:0000255" key="1">
    <source>
        <dbReference type="HAMAP-Rule" id="MF_01708"/>
    </source>
</evidence>
<evidence type="ECO:0000305" key="2"/>
<reference key="1">
    <citation type="journal article" date="2005" name="Nucleic Acids Res.">
        <title>Genome dynamics and diversity of Shigella species, the etiologic agents of bacillary dysentery.</title>
        <authorList>
            <person name="Yang F."/>
            <person name="Yang J."/>
            <person name="Zhang X."/>
            <person name="Chen L."/>
            <person name="Jiang Y."/>
            <person name="Yan Y."/>
            <person name="Tang X."/>
            <person name="Wang J."/>
            <person name="Xiong Z."/>
            <person name="Dong J."/>
            <person name="Xue Y."/>
            <person name="Zhu Y."/>
            <person name="Xu X."/>
            <person name="Sun L."/>
            <person name="Chen S."/>
            <person name="Nie H."/>
            <person name="Peng J."/>
            <person name="Xu J."/>
            <person name="Wang Y."/>
            <person name="Yuan Z."/>
            <person name="Wen Y."/>
            <person name="Yao Z."/>
            <person name="Shen Y."/>
            <person name="Qiang B."/>
            <person name="Hou Y."/>
            <person name="Yu J."/>
            <person name="Jin Q."/>
        </authorList>
    </citation>
    <scope>NUCLEOTIDE SEQUENCE [LARGE SCALE GENOMIC DNA]</scope>
    <source>
        <strain>Sb227</strain>
    </source>
</reference>
<proteinExistence type="inferred from homology"/>
<feature type="chain" id="PRO_0000272153" description="Lipoprotein-releasing system ATP-binding protein LolD">
    <location>
        <begin position="1"/>
        <end position="233"/>
    </location>
</feature>
<feature type="domain" description="ABC transporter" evidence="1">
    <location>
        <begin position="6"/>
        <end position="233"/>
    </location>
</feature>
<feature type="binding site" evidence="1">
    <location>
        <begin position="42"/>
        <end position="49"/>
    </location>
    <ligand>
        <name>ATP</name>
        <dbReference type="ChEBI" id="CHEBI:30616"/>
    </ligand>
</feature>
<name>LOLD_SHIBS</name>
<gene>
    <name evidence="1" type="primary">lolD</name>
    <name type="ordered locus">SBO_1944</name>
</gene>
<comment type="function">
    <text evidence="1">Part of the ABC transporter complex LolCDE involved in the translocation of mature outer membrane-directed lipoproteins, from the inner membrane to the periplasmic chaperone, LolA. Responsible for the formation of the LolA-lipoprotein complex in an ATP-dependent manner.</text>
</comment>
<comment type="subunit">
    <text evidence="1">The complex is composed of two ATP-binding proteins (LolD) and two transmembrane proteins (LolC and LolE).</text>
</comment>
<comment type="subcellular location">
    <subcellularLocation>
        <location evidence="1">Cell inner membrane</location>
        <topology evidence="1">Peripheral membrane protein</topology>
    </subcellularLocation>
</comment>
<comment type="similarity">
    <text evidence="1">Belongs to the ABC transporter superfamily. Lipoprotein translocase (TC 3.A.1.125) family.</text>
</comment>
<comment type="sequence caution" evidence="2">
    <conflict type="erroneous initiation">
        <sequence resource="EMBL-CDS" id="ABB66534"/>
    </conflict>
</comment>
<sequence length="233" mass="25399">MNKILLQCDNLCKRYQEGSVQTDVLHNVSFSVGEGEMMAIVGSSGSGKSTLLHLLGGLDTPTSGDVIFNGQPMSKLSSAAKAELRNQKLGFIYQFHHLLPDFTALENVAMPLLIGKKKPAEINSCALEMLKAVGLEHRANHRPSELSGGERQRVAIARALVNNPRLVLADEPTGNLDARNADSIFQLLGELNRLQGTAFLVVTHDLQLAKRMSRQLEMRDGRLTAELSLMGAE</sequence>
<accession>Q31ZH4</accession>